<name>NFS1_YEAST</name>
<organism>
    <name type="scientific">Saccharomyces cerevisiae (strain ATCC 204508 / S288c)</name>
    <name type="common">Baker's yeast</name>
    <dbReference type="NCBI Taxonomy" id="559292"/>
    <lineage>
        <taxon>Eukaryota</taxon>
        <taxon>Fungi</taxon>
        <taxon>Dikarya</taxon>
        <taxon>Ascomycota</taxon>
        <taxon>Saccharomycotina</taxon>
        <taxon>Saccharomycetes</taxon>
        <taxon>Saccharomycetales</taxon>
        <taxon>Saccharomycetaceae</taxon>
        <taxon>Saccharomyces</taxon>
    </lineage>
</organism>
<comment type="function">
    <text evidence="5 6 8 9 11 12">Catalyzes the removal of elemental sulfur from cysteine to produce alanine (PubMed:15220327). It supplies the inorganic sulfur for iron-sulfur (Fe-S) clusters (PubMed:10406803, PubMed:10551871, PubMed:15220327, PubMed:31040179). Plays a role in both tRNA-processing and mitochondrial metabolism (PubMed:15220327). Involved in the 2-thio-modification of both 5-carboxymethylaminomethyl-2-thiouridine in mitochondrial tRNAs and 5-methoxycarbonylmethyl-2-thiouridine (mcm5s2U) in cytoplasmic tRNAs (PubMed:14722066, PubMed:15220327, PubMed:8444805).</text>
</comment>
<comment type="catalytic activity">
    <reaction evidence="9">
        <text>(sulfur carrier)-H + L-cysteine = (sulfur carrier)-SH + L-alanine</text>
        <dbReference type="Rhea" id="RHEA:43892"/>
        <dbReference type="Rhea" id="RHEA-COMP:14737"/>
        <dbReference type="Rhea" id="RHEA-COMP:14739"/>
        <dbReference type="ChEBI" id="CHEBI:29917"/>
        <dbReference type="ChEBI" id="CHEBI:35235"/>
        <dbReference type="ChEBI" id="CHEBI:57972"/>
        <dbReference type="ChEBI" id="CHEBI:64428"/>
        <dbReference type="EC" id="2.8.1.7"/>
    </reaction>
</comment>
<comment type="cofactor">
    <cofactor evidence="3">
        <name>pyridoxal 5'-phosphate</name>
        <dbReference type="ChEBI" id="CHEBI:597326"/>
    </cofactor>
</comment>
<comment type="biophysicochemical properties">
    <phDependence>
        <text evidence="9">Optimum pH is 8.5.</text>
    </phDependence>
</comment>
<comment type="interaction">
    <interactant intactId="EBI-11991">
        <id>P25374</id>
    </interactant>
    <interactant intactId="EBI-784315">
        <id>Q6Q560</id>
        <label>ISD11</label>
    </interactant>
    <organismsDiffer>false</organismsDiffer>
    <experiments>11</experiments>
</comment>
<comment type="interaction">
    <interactant intactId="EBI-11991">
        <id>P25374</id>
    </interactant>
    <interactant intactId="EBI-29901">
        <id>Q03020</id>
        <label>ISU1</label>
    </interactant>
    <organismsDiffer>false</organismsDiffer>
    <experiments>4</experiments>
</comment>
<comment type="subcellular location">
    <subcellularLocation>
        <location evidence="5 6">Mitochondrion</location>
    </subcellularLocation>
</comment>
<comment type="domain">
    <text evidence="9">the N-terminal beta-strand formed by residues 99-104 is essential for the function.</text>
</comment>
<comment type="disruption phenotype">
    <text evidence="5 6 8 9 10">Impairs cysteine desulfurase activity of mitochondria. Leads to strong accumulation of free iron, not bound to heme or Fe/S clusters, in mitochondria, as well as to decreased amounts of the mitochondrial Fe/S proteins including aconitase and succinate dehydrogenase. Also leads to accumulation of 5-methoxycarbonylmethyluridine (mcm5U) and a concomitant decrease in 5-methoxycarbonylmethyl-2-thiouridine (mcm5s2U) in cytoplasmic tRNAs. Increases association between GRX5 and SSQ1 (PubMed:23615440).</text>
</comment>
<comment type="miscellaneous">
    <text evidence="7">Present with 504 molecules/cell in log phase SD medium.</text>
</comment>
<comment type="similarity">
    <text evidence="15">Belongs to the class-V pyridoxal-phosphate-dependent aminotransferase family. NifS/IscS subfamily.</text>
</comment>
<evidence type="ECO:0000250" key="1">
    <source>
        <dbReference type="UniProtKB" id="O29689"/>
    </source>
</evidence>
<evidence type="ECO:0000250" key="2">
    <source>
        <dbReference type="UniProtKB" id="P0A6B7"/>
    </source>
</evidence>
<evidence type="ECO:0000250" key="3">
    <source>
        <dbReference type="UniProtKB" id="P0A6B9"/>
    </source>
</evidence>
<evidence type="ECO:0000255" key="4"/>
<evidence type="ECO:0000269" key="5">
    <source>
    </source>
</evidence>
<evidence type="ECO:0000269" key="6">
    <source>
    </source>
</evidence>
<evidence type="ECO:0000269" key="7">
    <source>
    </source>
</evidence>
<evidence type="ECO:0000269" key="8">
    <source>
    </source>
</evidence>
<evidence type="ECO:0000269" key="9">
    <source>
    </source>
</evidence>
<evidence type="ECO:0000269" key="10">
    <source>
    </source>
</evidence>
<evidence type="ECO:0000269" key="11">
    <source>
    </source>
</evidence>
<evidence type="ECO:0000269" key="12">
    <source>
    </source>
</evidence>
<evidence type="ECO:0000303" key="13">
    <source>
    </source>
</evidence>
<evidence type="ECO:0000303" key="14">
    <source>
    </source>
</evidence>
<evidence type="ECO:0000305" key="15"/>
<evidence type="ECO:0000312" key="16">
    <source>
        <dbReference type="SGD" id="S000000522"/>
    </source>
</evidence>
<keyword id="KW-0408">Iron</keyword>
<keyword id="KW-0411">Iron-sulfur</keyword>
<keyword id="KW-0479">Metal-binding</keyword>
<keyword id="KW-0496">Mitochondrion</keyword>
<keyword id="KW-0663">Pyridoxal phosphate</keyword>
<keyword id="KW-1185">Reference proteome</keyword>
<keyword id="KW-0808">Transferase</keyword>
<keyword id="KW-0809">Transit peptide</keyword>
<keyword id="KW-0819">tRNA processing</keyword>
<sequence>MLKSTATRSITRLSQVYNVPAATYRACLVSRRFYSPPAAGVKLDDNFSLETHTDIQAAAKAQASARASASGTTPDAVVASGSTAMSHAYQENTGFGTRPIYLDMQATTPTDPRVLDTMLKFYTGLYGNPHSNTHSYGWETNTAVENARAHVAKMINADPKEIIFTSGATESNNMVLKGVPRFYKKTKKHIITTRTEHKCVLEAARAMMKEGFEVTFLNVDDQGLIDLKELEDAIRPDTCLVSVMAVNNEIGVIQPIKEIGAICRKNKIYFHTDAAQAYGKIHIDVNEMNIDLLSISSHKIYGPKGIGAIYVRRRPRVRLEPLLSGGGQERGLRSGTLAPPLVAGFGEAARLMKKEFDNDQAHIKRLSDKLVKGLLSAEHTTLNGSPDHRYPGCVNVSFAYVEGESLLMALRDIALSSGSACTSASLEPSYVLHALGKDDALAHSSIRFGIGRFSTEEEVDYVVKAVSDRVKFLRELSPLWEMVQEGIDLNSIKWSGH</sequence>
<protein>
    <recommendedName>
        <fullName evidence="13">Cysteine desulfurase, mitochondrial</fullName>
        <ecNumber evidence="9">2.8.1.7</ecNumber>
    </recommendedName>
    <alternativeName>
        <fullName evidence="14">tRNA-splicing protein SPL1</fullName>
    </alternativeName>
</protein>
<reference key="1">
    <citation type="journal article" date="1993" name="J. Bacteriol.">
        <title>SPL1-1, a Saccharomyces cerevisiae mutation affecting tRNA splicing.</title>
        <authorList>
            <person name="Leong-Morgenthaler P.M."/>
            <person name="Kolman C."/>
            <person name="Oliver S.G."/>
            <person name="Hottinger H."/>
            <person name="Soell D."/>
        </authorList>
    </citation>
    <scope>NUCLEOTIDE SEQUENCE [GENOMIC DNA]</scope>
    <scope>FUNCTION</scope>
</reference>
<reference key="2">
    <citation type="journal article" date="1992" name="Nature">
        <title>The complete DNA sequence of yeast chromosome III.</title>
        <authorList>
            <person name="Oliver S.G."/>
            <person name="van der Aart Q.J.M."/>
            <person name="Agostoni-Carbone M.L."/>
            <person name="Aigle M."/>
            <person name="Alberghina L."/>
            <person name="Alexandraki D."/>
            <person name="Antoine G."/>
            <person name="Anwar R."/>
            <person name="Ballesta J.P.G."/>
            <person name="Benit P."/>
            <person name="Berben G."/>
            <person name="Bergantino E."/>
            <person name="Biteau N."/>
            <person name="Bolle P.-A."/>
            <person name="Bolotin-Fukuhara M."/>
            <person name="Brown A."/>
            <person name="Brown A.J.P."/>
            <person name="Buhler J.-M."/>
            <person name="Carcano C."/>
            <person name="Carignani G."/>
            <person name="Cederberg H."/>
            <person name="Chanet R."/>
            <person name="Contreras R."/>
            <person name="Crouzet M."/>
            <person name="Daignan-Fornier B."/>
            <person name="Defoor E."/>
            <person name="Delgado M.D."/>
            <person name="Demolder J."/>
            <person name="Doira C."/>
            <person name="Dubois E."/>
            <person name="Dujon B."/>
            <person name="Duesterhoeft A."/>
            <person name="Erdmann D."/>
            <person name="Esteban M."/>
            <person name="Fabre F."/>
            <person name="Fairhead C."/>
            <person name="Faye G."/>
            <person name="Feldmann H."/>
            <person name="Fiers W."/>
            <person name="Francingues-Gaillard M.-C."/>
            <person name="Franco L."/>
            <person name="Frontali L."/>
            <person name="Fukuhara H."/>
            <person name="Fuller L.J."/>
            <person name="Galland P."/>
            <person name="Gent M.E."/>
            <person name="Gigot D."/>
            <person name="Gilliquet V."/>
            <person name="Glansdorff N."/>
            <person name="Goffeau A."/>
            <person name="Grenson M."/>
            <person name="Grisanti P."/>
            <person name="Grivell L.A."/>
            <person name="de Haan M."/>
            <person name="Haasemann M."/>
            <person name="Hatat D."/>
            <person name="Hoenicka J."/>
            <person name="Hegemann J.H."/>
            <person name="Herbert C.J."/>
            <person name="Hilger F."/>
            <person name="Hohmann S."/>
            <person name="Hollenberg C.P."/>
            <person name="Huse K."/>
            <person name="Iborra F."/>
            <person name="Indge K.J."/>
            <person name="Isono K."/>
            <person name="Jacq C."/>
            <person name="Jacquet M."/>
            <person name="James C.M."/>
            <person name="Jauniaux J.-C."/>
            <person name="Jia Y."/>
            <person name="Jimenez A."/>
            <person name="Kelly A."/>
            <person name="Kleinhans U."/>
            <person name="Kreisl P."/>
            <person name="Lanfranchi G."/>
            <person name="Lewis C."/>
            <person name="van der Linden C.G."/>
            <person name="Lucchini G."/>
            <person name="Lutzenkirchen K."/>
            <person name="Maat M.J."/>
            <person name="Mallet L."/>
            <person name="Mannhaupt G."/>
            <person name="Martegani E."/>
            <person name="Mathieu A."/>
            <person name="Maurer C.T.C."/>
            <person name="McConnell D."/>
            <person name="McKee R.A."/>
            <person name="Messenguy F."/>
            <person name="Mewes H.-W."/>
            <person name="Molemans F."/>
            <person name="Montague M.A."/>
            <person name="Muzi Falconi M."/>
            <person name="Navas L."/>
            <person name="Newlon C.S."/>
            <person name="Noone D."/>
            <person name="Pallier C."/>
            <person name="Panzeri L."/>
            <person name="Pearson B.M."/>
            <person name="Perea J."/>
            <person name="Philippsen P."/>
            <person name="Pierard A."/>
            <person name="Planta R.J."/>
            <person name="Plevani P."/>
            <person name="Poetsch B."/>
            <person name="Pohl F.M."/>
            <person name="Purnelle B."/>
            <person name="Ramezani Rad M."/>
            <person name="Rasmussen S.W."/>
            <person name="Raynal A."/>
            <person name="Remacha M.A."/>
            <person name="Richterich P."/>
            <person name="Roberts A.B."/>
            <person name="Rodriguez F."/>
            <person name="Sanz E."/>
            <person name="Schaaff-Gerstenschlaeger I."/>
            <person name="Scherens B."/>
            <person name="Schweitzer B."/>
            <person name="Shu Y."/>
            <person name="Skala J."/>
            <person name="Slonimski P.P."/>
            <person name="Sor F."/>
            <person name="Soustelle C."/>
            <person name="Spiegelberg R."/>
            <person name="Stateva L.I."/>
            <person name="Steensma H.Y."/>
            <person name="Steiner S."/>
            <person name="Thierry A."/>
            <person name="Thireos G."/>
            <person name="Tzermia M."/>
            <person name="Urrestarazu L.A."/>
            <person name="Valle G."/>
            <person name="Vetter I."/>
            <person name="van Vliet-Reedijk J.C."/>
            <person name="Voet M."/>
            <person name="Volckaert G."/>
            <person name="Vreken P."/>
            <person name="Wang H."/>
            <person name="Warmington J.R."/>
            <person name="von Wettstein D."/>
            <person name="Wicksteed B.L."/>
            <person name="Wilson C."/>
            <person name="Wurst H."/>
            <person name="Xu G."/>
            <person name="Yoshikawa A."/>
            <person name="Zimmermann F.K."/>
            <person name="Sgouros J.G."/>
        </authorList>
    </citation>
    <scope>NUCLEOTIDE SEQUENCE [LARGE SCALE GENOMIC DNA]</scope>
    <source>
        <strain>ATCC 204508 / S288c</strain>
    </source>
</reference>
<reference key="3">
    <citation type="submission" date="2001-06" db="EMBL/GenBank/DDBJ databases">
        <authorList>
            <person name="Valles G."/>
            <person name="Volckaerts G."/>
        </authorList>
    </citation>
    <scope>SEQUENCE REVISION TO 150</scope>
</reference>
<reference key="4">
    <citation type="journal article" date="2014" name="G3 (Bethesda)">
        <title>The reference genome sequence of Saccharomyces cerevisiae: Then and now.</title>
        <authorList>
            <person name="Engel S.R."/>
            <person name="Dietrich F.S."/>
            <person name="Fisk D.G."/>
            <person name="Binkley G."/>
            <person name="Balakrishnan R."/>
            <person name="Costanzo M.C."/>
            <person name="Dwight S.S."/>
            <person name="Hitz B.C."/>
            <person name="Karra K."/>
            <person name="Nash R.S."/>
            <person name="Weng S."/>
            <person name="Wong E.D."/>
            <person name="Lloyd P."/>
            <person name="Skrzypek M.S."/>
            <person name="Miyasato S.R."/>
            <person name="Simison M."/>
            <person name="Cherry J.M."/>
        </authorList>
    </citation>
    <scope>GENOME REANNOTATION</scope>
    <source>
        <strain>ATCC 204508 / S288c</strain>
    </source>
</reference>
<reference key="5">
    <citation type="journal article" date="1984" name="Gene">
        <title>Nucleotide sequence of the 3' terminal region of the LEU2 gene from Saccharomyces cerevisiae.</title>
        <authorList>
            <person name="Froman B.E."/>
            <person name="Tait R.C."/>
            <person name="Rodriguez R.L."/>
        </authorList>
    </citation>
    <scope>NUCLEOTIDE SEQUENCE [GENOMIC DNA] OF 459-497</scope>
</reference>
<reference key="6">
    <citation type="journal article" date="1999" name="EMBO J.">
        <title>The mitochondrial proteins Atm1p and Nfs1p are essential for biogenesis of cytosolic Fe/S proteins.</title>
        <authorList>
            <person name="Kispal G."/>
            <person name="Csere P."/>
            <person name="Prohl C."/>
            <person name="Lill R."/>
        </authorList>
    </citation>
    <scope>SUBCELLULAR LOCATION</scope>
    <scope>DISRUPTION PHENOTYPE</scope>
    <scope>FUNCTION</scope>
</reference>
<reference key="7">
    <citation type="journal article" date="1999" name="J. Biol. Chem.">
        <title>Yeast mitochondrial protein, Nfs1p, coordinately regulates iron-sulfur cluster proteins, cellular iron uptake, and iron distribution.</title>
        <authorList>
            <person name="Li J."/>
            <person name="Kogan M."/>
            <person name="Knight S.A."/>
            <person name="Pain D."/>
            <person name="Dancis A."/>
        </authorList>
    </citation>
    <scope>SUBCELLULAR LOCATION</scope>
    <scope>DISRUPTION PHENOTYPE</scope>
    <scope>FUNCTION</scope>
    <scope>MUTAGENESIS OF ILE-191</scope>
</reference>
<reference key="8">
    <citation type="journal article" date="2003" name="Nature">
        <title>Global analysis of protein expression in yeast.</title>
        <authorList>
            <person name="Ghaemmaghami S."/>
            <person name="Huh W.-K."/>
            <person name="Bower K."/>
            <person name="Howson R.W."/>
            <person name="Belle A."/>
            <person name="Dephoure N."/>
            <person name="O'Shea E.K."/>
            <person name="Weissman J.S."/>
        </authorList>
    </citation>
    <scope>LEVEL OF PROTEIN EXPRESSION [LARGE SCALE ANALYSIS]</scope>
</reference>
<reference key="9">
    <citation type="journal article" date="2004" name="J. Biol. Chem.">
        <title>Yeast Nfs1p is involved in thio-modification of both mitochondrial and cytoplasmic tRNAs.</title>
        <authorList>
            <person name="Nakai Y."/>
            <person name="Umeda N."/>
            <person name="Suzuki T."/>
            <person name="Nakai M."/>
            <person name="Hayashi H."/>
            <person name="Watanabe K."/>
            <person name="Kagamiyama H."/>
        </authorList>
    </citation>
    <scope>FUNCTION</scope>
    <scope>DISRUPTION PHENOTYPE</scope>
</reference>
<reference key="10">
    <citation type="journal article" date="2004" name="J. Biol. Chem.">
        <title>Functional characterization of the eukaryotic cysteine desulfurase Nfs1p from Saccharomyces cerevisiae.</title>
        <authorList>
            <person name="Muhlenhoff U."/>
            <person name="Balk J."/>
            <person name="Richhardt N."/>
            <person name="Kaiser J.T."/>
            <person name="Sipos K."/>
            <person name="Kispal G."/>
            <person name="Lill R."/>
        </authorList>
    </citation>
    <scope>FUNCTION</scope>
    <scope>CATALYTIC ACTIVITY</scope>
    <scope>BIOPHYSICOCHEMICAL PROPERTIES</scope>
    <scope>DISRUPTION PHENOTYPE</scope>
    <scope>DOMAIN</scope>
</reference>
<reference key="11">
    <citation type="journal article" date="2013" name="Mol. Biol. Cell">
        <title>The mitochondrial Hsp70 chaperone Ssq1 facilitates Fe/S cluster transfer from Isu1 to Grx5 by complex formation.</title>
        <authorList>
            <person name="Uzarska M.A."/>
            <person name="Dutkiewicz R."/>
            <person name="Freibert S.A."/>
            <person name="Lill R."/>
            <person name="Muehlenhoff U."/>
        </authorList>
    </citation>
    <scope>DISRUPTION PHENOTYPE</scope>
</reference>
<reference key="12">
    <citation type="journal article" date="2019" name="J. Biol. Chem.">
        <title>Mitochondria export iron-sulfur and sulfur intermediates to the cytoplasm for iron-sulfur cluster assembly and tRNA thiolation in yeast.</title>
        <authorList>
            <person name="Pandey A.K."/>
            <person name="Pain J."/>
            <person name="Dancis A."/>
            <person name="Pain D."/>
        </authorList>
    </citation>
    <scope>FUNCTION</scope>
    <scope>MUTAGENESIS OF ILE-191</scope>
</reference>
<accession>P25374</accession>
<accession>D6VQZ7</accession>
<gene>
    <name evidence="16" type="primary">NFS1</name>
    <name evidence="14" type="synonym">SPL1</name>
    <name evidence="16" type="ordered locus">YCL017C</name>
</gene>
<dbReference type="EC" id="2.8.1.7" evidence="9"/>
<dbReference type="EMBL" id="M98808">
    <property type="protein sequence ID" value="AAA34814.1"/>
    <property type="molecule type" value="Genomic_DNA"/>
</dbReference>
<dbReference type="EMBL" id="X59720">
    <property type="protein sequence ID" value="CAA42344.2"/>
    <property type="molecule type" value="Genomic_DNA"/>
</dbReference>
<dbReference type="EMBL" id="M12909">
    <property type="protein sequence ID" value="AAA66918.1"/>
    <property type="molecule type" value="Genomic_DNA"/>
</dbReference>
<dbReference type="EMBL" id="BK006937">
    <property type="protein sequence ID" value="DAA07466.1"/>
    <property type="molecule type" value="Genomic_DNA"/>
</dbReference>
<dbReference type="PIR" id="S19343">
    <property type="entry name" value="S19343"/>
</dbReference>
<dbReference type="RefSeq" id="NP_009912.2">
    <property type="nucleotide sequence ID" value="NM_001178664.1"/>
</dbReference>
<dbReference type="SMR" id="P25374"/>
<dbReference type="BioGRID" id="30967">
    <property type="interactions" value="435"/>
</dbReference>
<dbReference type="ComplexPortal" id="CPX-392">
    <property type="entry name" value="Mitochondrial NIAUFX iron-sulfur cluster assembly complex"/>
</dbReference>
<dbReference type="DIP" id="DIP-2948N"/>
<dbReference type="FunCoup" id="P25374">
    <property type="interactions" value="1093"/>
</dbReference>
<dbReference type="IntAct" id="P25374">
    <property type="interactions" value="19"/>
</dbReference>
<dbReference type="MINT" id="P25374"/>
<dbReference type="STRING" id="4932.YCL017C"/>
<dbReference type="iPTMnet" id="P25374"/>
<dbReference type="PaxDb" id="4932-YCL017C"/>
<dbReference type="PeptideAtlas" id="P25374"/>
<dbReference type="EnsemblFungi" id="YCL017C_mRNA">
    <property type="protein sequence ID" value="YCL017C"/>
    <property type="gene ID" value="YCL017C"/>
</dbReference>
<dbReference type="GeneID" id="850343"/>
<dbReference type="KEGG" id="sce:YCL017C"/>
<dbReference type="AGR" id="SGD:S000000522"/>
<dbReference type="SGD" id="S000000522">
    <property type="gene designation" value="NFS1"/>
</dbReference>
<dbReference type="VEuPathDB" id="FungiDB:YCL017C"/>
<dbReference type="eggNOG" id="KOG1549">
    <property type="taxonomic scope" value="Eukaryota"/>
</dbReference>
<dbReference type="GeneTree" id="ENSGT00940000155740"/>
<dbReference type="HOGENOM" id="CLU_003433_0_2_1"/>
<dbReference type="InParanoid" id="P25374"/>
<dbReference type="OMA" id="KGLYWAR"/>
<dbReference type="OrthoDB" id="10250117at2759"/>
<dbReference type="BioCyc" id="MetaCyc:G3O-29283-MONOMER"/>
<dbReference type="BioCyc" id="YEAST:G3O-29283-MONOMER"/>
<dbReference type="Reactome" id="R-SCE-1362409">
    <property type="pathway name" value="Mitochondrial iron-sulfur cluster biogenesis"/>
</dbReference>
<dbReference type="Reactome" id="R-SCE-947581">
    <property type="pathway name" value="Molybdenum cofactor biosynthesis"/>
</dbReference>
<dbReference type="Reactome" id="R-SCE-9865881">
    <property type="pathway name" value="Complex III assembly"/>
</dbReference>
<dbReference type="BioGRID-ORCS" id="850343">
    <property type="hits" value="9 hits in 10 CRISPR screens"/>
</dbReference>
<dbReference type="CD-CODE" id="E03F929F">
    <property type="entry name" value="Stress granule"/>
</dbReference>
<dbReference type="PRO" id="PR:P25374"/>
<dbReference type="Proteomes" id="UP000002311">
    <property type="component" value="Chromosome III"/>
</dbReference>
<dbReference type="RNAct" id="P25374">
    <property type="molecule type" value="protein"/>
</dbReference>
<dbReference type="GO" id="GO:0005829">
    <property type="term" value="C:cytosol"/>
    <property type="evidence" value="ECO:0000318"/>
    <property type="project" value="GO_Central"/>
</dbReference>
<dbReference type="GO" id="GO:1990229">
    <property type="term" value="C:iron-sulfur cluster assembly complex"/>
    <property type="evidence" value="ECO:0000303"/>
    <property type="project" value="ComplexPortal"/>
</dbReference>
<dbReference type="GO" id="GO:1990221">
    <property type="term" value="C:L-cysteine desulfurase complex"/>
    <property type="evidence" value="ECO:0000353"/>
    <property type="project" value="SGD"/>
</dbReference>
<dbReference type="GO" id="GO:0005739">
    <property type="term" value="C:mitochondrion"/>
    <property type="evidence" value="ECO:0000314"/>
    <property type="project" value="SGD"/>
</dbReference>
<dbReference type="GO" id="GO:0005634">
    <property type="term" value="C:nucleus"/>
    <property type="evidence" value="ECO:0000314"/>
    <property type="project" value="SGD"/>
</dbReference>
<dbReference type="GO" id="GO:0031071">
    <property type="term" value="F:cysteine desulfurase activity"/>
    <property type="evidence" value="ECO:0000314"/>
    <property type="project" value="SGD"/>
</dbReference>
<dbReference type="GO" id="GO:0051536">
    <property type="term" value="F:iron-sulfur cluster binding"/>
    <property type="evidence" value="ECO:0007669"/>
    <property type="project" value="UniProtKB-KW"/>
</dbReference>
<dbReference type="GO" id="GO:0046872">
    <property type="term" value="F:metal ion binding"/>
    <property type="evidence" value="ECO:0007669"/>
    <property type="project" value="UniProtKB-KW"/>
</dbReference>
<dbReference type="GO" id="GO:0030170">
    <property type="term" value="F:pyridoxal phosphate binding"/>
    <property type="evidence" value="ECO:0007669"/>
    <property type="project" value="InterPro"/>
</dbReference>
<dbReference type="GO" id="GO:0044571">
    <property type="term" value="P:[2Fe-2S] cluster assembly"/>
    <property type="evidence" value="ECO:0007669"/>
    <property type="project" value="InterPro"/>
</dbReference>
<dbReference type="GO" id="GO:0006879">
    <property type="term" value="P:intracellular iron ion homeostasis"/>
    <property type="evidence" value="ECO:0000315"/>
    <property type="project" value="SGD"/>
</dbReference>
<dbReference type="GO" id="GO:0016226">
    <property type="term" value="P:iron-sulfur cluster assembly"/>
    <property type="evidence" value="ECO:0000314"/>
    <property type="project" value="SGD"/>
</dbReference>
<dbReference type="GO" id="GO:0070903">
    <property type="term" value="P:mitochondrial tRNA thio-modification"/>
    <property type="evidence" value="ECO:0000315"/>
    <property type="project" value="SGD"/>
</dbReference>
<dbReference type="GO" id="GO:0034227">
    <property type="term" value="P:tRNA thio-modification"/>
    <property type="evidence" value="ECO:0000315"/>
    <property type="project" value="SGD"/>
</dbReference>
<dbReference type="GO" id="GO:0002098">
    <property type="term" value="P:tRNA wobble uridine modification"/>
    <property type="evidence" value="ECO:0000315"/>
    <property type="project" value="SGD"/>
</dbReference>
<dbReference type="FunFam" id="3.40.640.10:FF:000003">
    <property type="entry name" value="Cysteine desulfurase IscS"/>
    <property type="match status" value="1"/>
</dbReference>
<dbReference type="FunFam" id="3.90.1150.10:FF:000002">
    <property type="entry name" value="Cysteine desulfurase IscS"/>
    <property type="match status" value="1"/>
</dbReference>
<dbReference type="Gene3D" id="3.90.1150.10">
    <property type="entry name" value="Aspartate Aminotransferase, domain 1"/>
    <property type="match status" value="1"/>
</dbReference>
<dbReference type="Gene3D" id="3.40.640.10">
    <property type="entry name" value="Type I PLP-dependent aspartate aminotransferase-like (Major domain)"/>
    <property type="match status" value="1"/>
</dbReference>
<dbReference type="HAMAP" id="MF_00331">
    <property type="entry name" value="Cys_desulf_IscS"/>
    <property type="match status" value="1"/>
</dbReference>
<dbReference type="InterPro" id="IPR000192">
    <property type="entry name" value="Aminotrans_V_dom"/>
</dbReference>
<dbReference type="InterPro" id="IPR020578">
    <property type="entry name" value="Aminotrans_V_PyrdxlP_BS"/>
</dbReference>
<dbReference type="InterPro" id="IPR010240">
    <property type="entry name" value="Cys_deSase_IscS"/>
</dbReference>
<dbReference type="InterPro" id="IPR015424">
    <property type="entry name" value="PyrdxlP-dep_Trfase"/>
</dbReference>
<dbReference type="InterPro" id="IPR015421">
    <property type="entry name" value="PyrdxlP-dep_Trfase_major"/>
</dbReference>
<dbReference type="InterPro" id="IPR015422">
    <property type="entry name" value="PyrdxlP-dep_Trfase_small"/>
</dbReference>
<dbReference type="NCBIfam" id="TIGR02006">
    <property type="entry name" value="IscS"/>
    <property type="match status" value="1"/>
</dbReference>
<dbReference type="NCBIfam" id="NF002806">
    <property type="entry name" value="PRK02948.1"/>
    <property type="match status" value="1"/>
</dbReference>
<dbReference type="NCBIfam" id="NF010611">
    <property type="entry name" value="PRK14012.1"/>
    <property type="match status" value="1"/>
</dbReference>
<dbReference type="PANTHER" id="PTHR11601:SF34">
    <property type="entry name" value="CYSTEINE DESULFURASE"/>
    <property type="match status" value="1"/>
</dbReference>
<dbReference type="PANTHER" id="PTHR11601">
    <property type="entry name" value="CYSTEINE DESULFURYLASE FAMILY MEMBER"/>
    <property type="match status" value="1"/>
</dbReference>
<dbReference type="Pfam" id="PF00266">
    <property type="entry name" value="Aminotran_5"/>
    <property type="match status" value="1"/>
</dbReference>
<dbReference type="SUPFAM" id="SSF53383">
    <property type="entry name" value="PLP-dependent transferases"/>
    <property type="match status" value="1"/>
</dbReference>
<dbReference type="PROSITE" id="PS00595">
    <property type="entry name" value="AA_TRANSFER_CLASS_5"/>
    <property type="match status" value="1"/>
</dbReference>
<feature type="transit peptide" description="Mitochondrion" evidence="4">
    <location>
        <begin position="1"/>
        <end position="33"/>
    </location>
</feature>
<feature type="chain" id="PRO_0000001304" description="Cysteine desulfurase, mitochondrial">
    <location>
        <begin position="34"/>
        <end position="497"/>
    </location>
</feature>
<feature type="active site" description="Cysteine persulfide intermediate" evidence="2">
    <location>
        <position position="421"/>
    </location>
</feature>
<feature type="binding site" evidence="3">
    <location>
        <begin position="168"/>
        <end position="169"/>
    </location>
    <ligand>
        <name>pyridoxal 5'-phosphate</name>
        <dbReference type="ChEBI" id="CHEBI:597326"/>
    </ligand>
</feature>
<feature type="binding site" evidence="1">
    <location>
        <position position="248"/>
    </location>
    <ligand>
        <name>pyridoxal 5'-phosphate</name>
        <dbReference type="ChEBI" id="CHEBI:597326"/>
    </ligand>
</feature>
<feature type="binding site" evidence="3">
    <location>
        <position position="276"/>
    </location>
    <ligand>
        <name>pyridoxal 5'-phosphate</name>
        <dbReference type="ChEBI" id="CHEBI:597326"/>
    </ligand>
</feature>
<feature type="binding site" evidence="3">
    <location>
        <begin position="296"/>
        <end position="298"/>
    </location>
    <ligand>
        <name>pyridoxal 5'-phosphate</name>
        <dbReference type="ChEBI" id="CHEBI:597326"/>
    </ligand>
</feature>
<feature type="binding site" evidence="3">
    <location>
        <position position="336"/>
    </location>
    <ligand>
        <name>pyridoxal 5'-phosphate</name>
        <dbReference type="ChEBI" id="CHEBI:597326"/>
    </ligand>
</feature>
<feature type="binding site" description="via persulfide group" evidence="1">
    <location>
        <position position="421"/>
    </location>
    <ligand>
        <name>[2Fe-2S] cluster</name>
        <dbReference type="ChEBI" id="CHEBI:190135"/>
    </ligand>
</feature>
<feature type="modified residue" description="N6-(pyridoxal phosphate)lysine" evidence="3">
    <location>
        <position position="299"/>
    </location>
</feature>
<feature type="mutagenesis site" description="Disrupts iron-sulfur (Fe-S) cluster assembly and decreases cytosolic tRNA thiolation. Exhibits constitutive up-regulation of the genes of the cellular iron uptake system." evidence="6 11">
    <original>I</original>
    <variation>S</variation>
    <location>
        <position position="191"/>
    </location>
</feature>
<feature type="sequence conflict" description="In Ref. 1; AAA34814." evidence="15" ref="1">
    <original>H</original>
    <variation>Y</variation>
    <location>
        <position position="150"/>
    </location>
</feature>
<proteinExistence type="evidence at protein level"/>